<organism>
    <name type="scientific">Xanthomonas euvesicatoria pv. vesicatoria (strain 85-10)</name>
    <name type="common">Xanthomonas campestris pv. vesicatoria</name>
    <dbReference type="NCBI Taxonomy" id="316273"/>
    <lineage>
        <taxon>Bacteria</taxon>
        <taxon>Pseudomonadati</taxon>
        <taxon>Pseudomonadota</taxon>
        <taxon>Gammaproteobacteria</taxon>
        <taxon>Lysobacterales</taxon>
        <taxon>Lysobacteraceae</taxon>
        <taxon>Xanthomonas</taxon>
    </lineage>
</organism>
<evidence type="ECO:0000255" key="1">
    <source>
        <dbReference type="HAMAP-Rule" id="MF_00804"/>
    </source>
</evidence>
<feature type="chain" id="PRO_1000047060" description="Betaine aldehyde dehydrogenase">
    <location>
        <begin position="1"/>
        <end position="490"/>
    </location>
</feature>
<feature type="active site" description="Charge relay system" evidence="1">
    <location>
        <position position="162"/>
    </location>
</feature>
<feature type="active site" description="Proton acceptor" evidence="1">
    <location>
        <position position="252"/>
    </location>
</feature>
<feature type="active site" description="Nucleophile" evidence="1">
    <location>
        <position position="286"/>
    </location>
</feature>
<feature type="active site" description="Charge relay system" evidence="1">
    <location>
        <position position="464"/>
    </location>
</feature>
<feature type="binding site" evidence="1">
    <location>
        <position position="93"/>
    </location>
    <ligand>
        <name>K(+)</name>
        <dbReference type="ChEBI" id="CHEBI:29103"/>
        <label>1</label>
    </ligand>
</feature>
<feature type="binding site" evidence="1">
    <location>
        <begin position="150"/>
        <end position="152"/>
    </location>
    <ligand>
        <name>NAD(+)</name>
        <dbReference type="ChEBI" id="CHEBI:57540"/>
    </ligand>
</feature>
<feature type="binding site" evidence="1">
    <location>
        <begin position="176"/>
        <end position="179"/>
    </location>
    <ligand>
        <name>NAD(+)</name>
        <dbReference type="ChEBI" id="CHEBI:57540"/>
    </ligand>
</feature>
<feature type="binding site" evidence="1">
    <location>
        <position position="180"/>
    </location>
    <ligand>
        <name>K(+)</name>
        <dbReference type="ChEBI" id="CHEBI:29103"/>
        <label>1</label>
    </ligand>
</feature>
<feature type="binding site" evidence="1">
    <location>
        <begin position="230"/>
        <end position="233"/>
    </location>
    <ligand>
        <name>NAD(+)</name>
        <dbReference type="ChEBI" id="CHEBI:57540"/>
    </ligand>
</feature>
<feature type="binding site" evidence="1">
    <location>
        <position position="246"/>
    </location>
    <ligand>
        <name>K(+)</name>
        <dbReference type="ChEBI" id="CHEBI:29103"/>
        <label>2</label>
    </ligand>
</feature>
<feature type="binding site" evidence="1">
    <location>
        <position position="254"/>
    </location>
    <ligand>
        <name>NAD(+)</name>
        <dbReference type="ChEBI" id="CHEBI:57540"/>
    </ligand>
</feature>
<feature type="binding site" description="covalent" evidence="1">
    <location>
        <position position="286"/>
    </location>
    <ligand>
        <name>NAD(+)</name>
        <dbReference type="ChEBI" id="CHEBI:57540"/>
    </ligand>
</feature>
<feature type="binding site" evidence="1">
    <location>
        <position position="387"/>
    </location>
    <ligand>
        <name>NAD(+)</name>
        <dbReference type="ChEBI" id="CHEBI:57540"/>
    </ligand>
</feature>
<feature type="binding site" evidence="1">
    <location>
        <position position="457"/>
    </location>
    <ligand>
        <name>K(+)</name>
        <dbReference type="ChEBI" id="CHEBI:29103"/>
        <label>2</label>
    </ligand>
</feature>
<feature type="binding site" evidence="1">
    <location>
        <position position="460"/>
    </location>
    <ligand>
        <name>K(+)</name>
        <dbReference type="ChEBI" id="CHEBI:29103"/>
        <label>2</label>
    </ligand>
</feature>
<feature type="site" description="Seems to be a necessary countercharge to the potassium cations" evidence="1">
    <location>
        <position position="248"/>
    </location>
</feature>
<feature type="modified residue" description="Cysteine sulfenic acid (-SOH)" evidence="1">
    <location>
        <position position="286"/>
    </location>
</feature>
<comment type="function">
    <text evidence="1">Involved in the biosynthesis of the osmoprotectant glycine betaine. Catalyzes the irreversible oxidation of betaine aldehyde to the corresponding acid.</text>
</comment>
<comment type="catalytic activity">
    <reaction evidence="1">
        <text>betaine aldehyde + NAD(+) + H2O = glycine betaine + NADH + 2 H(+)</text>
        <dbReference type="Rhea" id="RHEA:15305"/>
        <dbReference type="ChEBI" id="CHEBI:15377"/>
        <dbReference type="ChEBI" id="CHEBI:15378"/>
        <dbReference type="ChEBI" id="CHEBI:15710"/>
        <dbReference type="ChEBI" id="CHEBI:17750"/>
        <dbReference type="ChEBI" id="CHEBI:57540"/>
        <dbReference type="ChEBI" id="CHEBI:57945"/>
        <dbReference type="EC" id="1.2.1.8"/>
    </reaction>
    <physiologicalReaction direction="left-to-right" evidence="1">
        <dbReference type="Rhea" id="RHEA:15306"/>
    </physiologicalReaction>
</comment>
<comment type="cofactor">
    <cofactor evidence="1">
        <name>K(+)</name>
        <dbReference type="ChEBI" id="CHEBI:29103"/>
    </cofactor>
    <text evidence="1">Binds 2 potassium ions per subunit.</text>
</comment>
<comment type="pathway">
    <text evidence="1">Amine and polyamine biosynthesis; betaine biosynthesis via choline pathway; betaine from betaine aldehyde: step 1/1.</text>
</comment>
<comment type="subunit">
    <text evidence="1">Dimer of dimers.</text>
</comment>
<comment type="similarity">
    <text evidence="1">Belongs to the aldehyde dehydrogenase family.</text>
</comment>
<reference key="1">
    <citation type="journal article" date="2005" name="J. Bacteriol.">
        <title>Insights into genome plasticity and pathogenicity of the plant pathogenic Bacterium Xanthomonas campestris pv. vesicatoria revealed by the complete genome sequence.</title>
        <authorList>
            <person name="Thieme F."/>
            <person name="Koebnik R."/>
            <person name="Bekel T."/>
            <person name="Berger C."/>
            <person name="Boch J."/>
            <person name="Buettner D."/>
            <person name="Caldana C."/>
            <person name="Gaigalat L."/>
            <person name="Goesmann A."/>
            <person name="Kay S."/>
            <person name="Kirchner O."/>
            <person name="Lanz C."/>
            <person name="Linke B."/>
            <person name="McHardy A.C."/>
            <person name="Meyer F."/>
            <person name="Mittenhuber G."/>
            <person name="Nies D.H."/>
            <person name="Niesbach-Kloesgen U."/>
            <person name="Patschkowski T."/>
            <person name="Rueckert C."/>
            <person name="Rupp O."/>
            <person name="Schneiker S."/>
            <person name="Schuster S.C."/>
            <person name="Vorhoelter F.J."/>
            <person name="Weber E."/>
            <person name="Puehler A."/>
            <person name="Bonas U."/>
            <person name="Bartels D."/>
            <person name="Kaiser O."/>
        </authorList>
    </citation>
    <scope>NUCLEOTIDE SEQUENCE [LARGE SCALE GENOMIC DNA]</scope>
    <source>
        <strain>85-10</strain>
    </source>
</reference>
<proteinExistence type="inferred from homology"/>
<sequence length="490" mass="52392">MPRFSDQLLYIGGRYVPARGGHTFEVVNPATGEVLANVHNAGADDLDAAVDSAQAGQRQWAALTTVERSRILLRAVALLRERNDALAELETLNTGKPLSETRSVDVVTGADVLEYYAGVAQALQGAQVPLREGSFFYTRHEPLGVVGAIGAWNYPIQIALWKAAPALAAGNAMIFKPSEVTPLTALKLAEIFTEAGLPDGVFNVLPGDGASVGTALTEHPQIEKISFTGGTATGRKVMASASSSSLKEVTMELGGKSPLIVCADADLDLAADIAMMANFYSSGQVCTNGTRVFVPRALRHAFEARLLARVQRIHIGDPLDERTTFGPLVSAAHMQRVLEHIEQGKAEGARLLCGGERLQDGALAQGYYVAPTIFSDCTDVMTIVREEIFGPVLSLLTYDDEDEAVTRANATTYGLAAGVVTPDLARAHRLIHRLEAGICWVNTWGESPAPMPVGGYKQSGVGRENGLATLQAYTRTKSVQIELERYASVF</sequence>
<gene>
    <name evidence="1" type="primary">betB</name>
    <name type="ordered locus">XCV0775</name>
</gene>
<protein>
    <recommendedName>
        <fullName evidence="1">Betaine aldehyde dehydrogenase</fullName>
        <shortName evidence="1">BADH</shortName>
        <ecNumber evidence="1">1.2.1.8</ecNumber>
    </recommendedName>
</protein>
<accession>Q3BXK7</accession>
<keyword id="KW-0479">Metal-binding</keyword>
<keyword id="KW-0520">NAD</keyword>
<keyword id="KW-0521">NADP</keyword>
<keyword id="KW-0558">Oxidation</keyword>
<keyword id="KW-0560">Oxidoreductase</keyword>
<keyword id="KW-0630">Potassium</keyword>
<name>BETB_XANE5</name>
<dbReference type="EC" id="1.2.1.8" evidence="1"/>
<dbReference type="EMBL" id="AM039952">
    <property type="protein sequence ID" value="CAJ22406.1"/>
    <property type="molecule type" value="Genomic_DNA"/>
</dbReference>
<dbReference type="RefSeq" id="WP_011346383.1">
    <property type="nucleotide sequence ID" value="NZ_CP017190.1"/>
</dbReference>
<dbReference type="SMR" id="Q3BXK7"/>
<dbReference type="STRING" id="456327.BJD11_18940"/>
<dbReference type="KEGG" id="xcv:XCV0775"/>
<dbReference type="eggNOG" id="COG1012">
    <property type="taxonomic scope" value="Bacteria"/>
</dbReference>
<dbReference type="HOGENOM" id="CLU_005391_0_2_6"/>
<dbReference type="UniPathway" id="UPA00529">
    <property type="reaction ID" value="UER00386"/>
</dbReference>
<dbReference type="Proteomes" id="UP000007069">
    <property type="component" value="Chromosome"/>
</dbReference>
<dbReference type="GO" id="GO:0008802">
    <property type="term" value="F:betaine-aldehyde dehydrogenase (NAD+) activity"/>
    <property type="evidence" value="ECO:0007669"/>
    <property type="project" value="UniProtKB-UniRule"/>
</dbReference>
<dbReference type="GO" id="GO:0046872">
    <property type="term" value="F:metal ion binding"/>
    <property type="evidence" value="ECO:0007669"/>
    <property type="project" value="UniProtKB-KW"/>
</dbReference>
<dbReference type="GO" id="GO:0019285">
    <property type="term" value="P:glycine betaine biosynthetic process from choline"/>
    <property type="evidence" value="ECO:0007669"/>
    <property type="project" value="UniProtKB-UniRule"/>
</dbReference>
<dbReference type="FunFam" id="3.40.309.10:FF:000014">
    <property type="entry name" value="NAD/NADP-dependent betaine aldehyde dehydrogenase"/>
    <property type="match status" value="1"/>
</dbReference>
<dbReference type="FunFam" id="3.40.605.10:FF:000007">
    <property type="entry name" value="NAD/NADP-dependent betaine aldehyde dehydrogenase"/>
    <property type="match status" value="1"/>
</dbReference>
<dbReference type="Gene3D" id="3.40.605.10">
    <property type="entry name" value="Aldehyde Dehydrogenase, Chain A, domain 1"/>
    <property type="match status" value="1"/>
</dbReference>
<dbReference type="Gene3D" id="3.40.309.10">
    <property type="entry name" value="Aldehyde Dehydrogenase, Chain A, domain 2"/>
    <property type="match status" value="1"/>
</dbReference>
<dbReference type="HAMAP" id="MF_00804">
    <property type="entry name" value="BADH"/>
    <property type="match status" value="1"/>
</dbReference>
<dbReference type="InterPro" id="IPR016161">
    <property type="entry name" value="Ald_DH/histidinol_DH"/>
</dbReference>
<dbReference type="InterPro" id="IPR016163">
    <property type="entry name" value="Ald_DH_C"/>
</dbReference>
<dbReference type="InterPro" id="IPR016160">
    <property type="entry name" value="Ald_DH_CS_CYS"/>
</dbReference>
<dbReference type="InterPro" id="IPR029510">
    <property type="entry name" value="Ald_DH_CS_GLU"/>
</dbReference>
<dbReference type="InterPro" id="IPR016162">
    <property type="entry name" value="Ald_DH_N"/>
</dbReference>
<dbReference type="InterPro" id="IPR015590">
    <property type="entry name" value="Aldehyde_DH_dom"/>
</dbReference>
<dbReference type="InterPro" id="IPR011264">
    <property type="entry name" value="BADH"/>
</dbReference>
<dbReference type="NCBIfam" id="TIGR01804">
    <property type="entry name" value="BADH"/>
    <property type="match status" value="1"/>
</dbReference>
<dbReference type="NCBIfam" id="NF009725">
    <property type="entry name" value="PRK13252.1"/>
    <property type="match status" value="1"/>
</dbReference>
<dbReference type="PANTHER" id="PTHR11699">
    <property type="entry name" value="ALDEHYDE DEHYDROGENASE-RELATED"/>
    <property type="match status" value="1"/>
</dbReference>
<dbReference type="Pfam" id="PF00171">
    <property type="entry name" value="Aldedh"/>
    <property type="match status" value="1"/>
</dbReference>
<dbReference type="SUPFAM" id="SSF53720">
    <property type="entry name" value="ALDH-like"/>
    <property type="match status" value="1"/>
</dbReference>
<dbReference type="PROSITE" id="PS00070">
    <property type="entry name" value="ALDEHYDE_DEHYDR_CYS"/>
    <property type="match status" value="1"/>
</dbReference>
<dbReference type="PROSITE" id="PS00687">
    <property type="entry name" value="ALDEHYDE_DEHYDR_GLU"/>
    <property type="match status" value="1"/>
</dbReference>